<evidence type="ECO:0000269" key="1">
    <source>
    </source>
</evidence>
<evidence type="ECO:0000303" key="2">
    <source>
    </source>
</evidence>
<evidence type="ECO:0000305" key="3"/>
<evidence type="ECO:0000305" key="4">
    <source ref="2"/>
</evidence>
<evidence type="ECO:0000312" key="5">
    <source>
        <dbReference type="EMBL" id="BAD86104.1"/>
    </source>
</evidence>
<evidence type="ECO:0007744" key="6">
    <source>
        <dbReference type="PDB" id="6SKF"/>
    </source>
</evidence>
<evidence type="ECO:0007744" key="7">
    <source>
        <dbReference type="PDB" id="6SKG"/>
    </source>
</evidence>
<evidence type="ECO:0007744" key="8">
    <source>
        <dbReference type="PDB" id="6TH6"/>
    </source>
</evidence>
<reference evidence="5" key="1">
    <citation type="journal article" date="2005" name="Genome Res.">
        <title>Complete genome sequence of the hyperthermophilic archaeon Thermococcus kodakaraensis KOD1 and comparison with Pyrococcus genomes.</title>
        <authorList>
            <person name="Fukui T."/>
            <person name="Atomi H."/>
            <person name="Kanai T."/>
            <person name="Matsumi R."/>
            <person name="Fujiwara S."/>
            <person name="Imanaka T."/>
        </authorList>
    </citation>
    <scope>NUCLEOTIDE SEQUENCE [LARGE SCALE GENOMIC DNA]</scope>
    <source>
        <strain>ATCC BAA-918 / JCM 12380 / KOD1</strain>
    </source>
</reference>
<reference key="2">
    <citation type="unpublished observations" date="2023-10">
        <authorList>
            <person name="Leibundgut M.A."/>
            <person name="Ban N."/>
        </authorList>
    </citation>
    <scope>REVISION OF SUBUNIT</scope>
    <scope>NOMENCLATURE</scope>
</reference>
<reference evidence="6 7 8" key="3">
    <citation type="journal article" date="2020" name="Nature">
        <title>Dynamic RNA acetylation revealed by quantitative cross-evolutionary mapping.</title>
        <authorList>
            <person name="Sas-Chen A."/>
            <person name="Thomas J.M."/>
            <person name="Matzov D."/>
            <person name="Taoka M."/>
            <person name="Nance K.D."/>
            <person name="Nir R."/>
            <person name="Bryson K.M."/>
            <person name="Shachar R."/>
            <person name="Liman G.L.S."/>
            <person name="Burkhart B.W."/>
            <person name="Gamage S.T."/>
            <person name="Nobe Y."/>
            <person name="Briney C.A."/>
            <person name="Levy M.J."/>
            <person name="Fuchs R.T."/>
            <person name="Robb G.B."/>
            <person name="Hartmann J."/>
            <person name="Sharma S."/>
            <person name="Lin Q."/>
            <person name="Florens L."/>
            <person name="Washburn M.P."/>
            <person name="Isobe T."/>
            <person name="Santangelo T.J."/>
            <person name="Shalev-Benami M."/>
            <person name="Meier J.L."/>
            <person name="Schwartz S."/>
        </authorList>
    </citation>
    <scope>STRUCTURE BY ELECTRON MICROSCOPY (2.55 ANGSTROMS) IN 70S RIBOSOME</scope>
    <scope>FUNCTION</scope>
    <scope>SUBUNIT</scope>
    <source>
        <strain>ATCC BAA-918 / TS559</strain>
    </source>
</reference>
<keyword id="KW-0002">3D-structure</keyword>
<keyword id="KW-1185">Reference proteome</keyword>
<keyword id="KW-0687">Ribonucleoprotein</keyword>
<keyword id="KW-0689">Ribosomal protein</keyword>
<protein>
    <recommendedName>
        <fullName evidence="4">Small ribosomal subunit protein eS32</fullName>
    </recommendedName>
    <alternativeName>
        <fullName evidence="2">50S ribosomal protein L41e</fullName>
    </alternativeName>
    <alternativeName>
        <fullName evidence="3">Large ribosomal subunit protein eL41</fullName>
    </alternativeName>
</protein>
<dbReference type="EMBL" id="AP006878">
    <property type="protein sequence ID" value="BAD86104.1"/>
    <property type="molecule type" value="Genomic_DNA"/>
</dbReference>
<dbReference type="PDB" id="6SKF">
    <property type="method" value="EM"/>
    <property type="resolution" value="2.95 A"/>
    <property type="chains" value="Bk=1-37"/>
</dbReference>
<dbReference type="PDB" id="6SKG">
    <property type="method" value="EM"/>
    <property type="resolution" value="2.65 A"/>
    <property type="chains" value="Bk=1-37"/>
</dbReference>
<dbReference type="PDB" id="6TH6">
    <property type="method" value="EM"/>
    <property type="resolution" value="2.55 A"/>
    <property type="chains" value="Bk=1-37"/>
</dbReference>
<dbReference type="PDBsum" id="6SKF"/>
<dbReference type="PDBsum" id="6SKG"/>
<dbReference type="PDBsum" id="6TH6"/>
<dbReference type="EMDB" id="EMD-10223"/>
<dbReference type="EMDB" id="EMD-10224"/>
<dbReference type="EMDB" id="EMD-10503"/>
<dbReference type="FunCoup" id="Q5JEV0">
    <property type="interactions" value="64"/>
</dbReference>
<dbReference type="STRING" id="69014.TK1915"/>
<dbReference type="EnsemblBacteria" id="BAD86104">
    <property type="protein sequence ID" value="BAD86104"/>
    <property type="gene ID" value="TK1915"/>
</dbReference>
<dbReference type="KEGG" id="tko:TK1915"/>
<dbReference type="PATRIC" id="fig|69014.16.peg.1872"/>
<dbReference type="eggNOG" id="arCOG06624">
    <property type="taxonomic scope" value="Archaea"/>
</dbReference>
<dbReference type="HOGENOM" id="CLU_219591_0_0_2"/>
<dbReference type="InParanoid" id="Q5JEV0"/>
<dbReference type="Proteomes" id="UP000000536">
    <property type="component" value="Chromosome"/>
</dbReference>
<dbReference type="GO" id="GO:1990904">
    <property type="term" value="C:ribonucleoprotein complex"/>
    <property type="evidence" value="ECO:0007669"/>
    <property type="project" value="UniProtKB-KW"/>
</dbReference>
<dbReference type="GO" id="GO:0005840">
    <property type="term" value="C:ribosome"/>
    <property type="evidence" value="ECO:0007669"/>
    <property type="project" value="UniProtKB-KW"/>
</dbReference>
<accession>Q5JEV0</accession>
<proteinExistence type="evidence at protein level"/>
<sequence length="37" mass="5029">MKRRPRKWKKKGRMRWKWIKKRIRRLKRQRRKERGLI</sequence>
<organism>
    <name type="scientific">Thermococcus kodakarensis (strain ATCC BAA-918 / JCM 12380 / KOD1)</name>
    <name type="common">Pyrococcus kodakaraensis (strain KOD1)</name>
    <dbReference type="NCBI Taxonomy" id="69014"/>
    <lineage>
        <taxon>Archaea</taxon>
        <taxon>Methanobacteriati</taxon>
        <taxon>Methanobacteriota</taxon>
        <taxon>Thermococci</taxon>
        <taxon>Thermococcales</taxon>
        <taxon>Thermococcaceae</taxon>
        <taxon>Thermococcus</taxon>
    </lineage>
</organism>
<gene>
    <name type="primary">rpl41e</name>
    <name evidence="5" type="ordered locus">TK1915</name>
</gene>
<name>RS32_THEKO</name>
<feature type="chain" id="PRO_0000461766" description="Small ribosomal subunit protein eS32">
    <location>
        <begin position="1"/>
        <end position="37"/>
    </location>
</feature>
<comment type="function">
    <text evidence="1">Interacts with N(4)-acetylcytidine (ac(4)C) 1459 of the small rRNA; the acetyl group of ac(4)C1459 briges the interaction with this protein.</text>
</comment>
<comment type="subunit">
    <text evidence="4">Part of the small ribosomal subunit.</text>
</comment>
<comment type="miscellaneous">
    <text evidence="4">Initially thought to be part of the large ribosomal subunit. Crystal structures show eS32/eL41 to be a small ribosomal subunit forming a bridge at the interface of the 2 subunits.</text>
</comment>
<comment type="similarity">
    <text evidence="3">Belongs to the eukaryotic ribosomal protein eS32 family.</text>
</comment>
<comment type="online information" name="Nomenclature of Ribosomal Proteins">
    <link uri="https://bangroup.ethz.ch/research/nomenclature-of-ribosomal-proteins.html#par_textimage_340336117"/>
</comment>